<proteinExistence type="evidence at protein level"/>
<dbReference type="EMBL" id="AL132975">
    <property type="protein sequence ID" value="CAB75909.1"/>
    <property type="status" value="ALT_SEQ"/>
    <property type="molecule type" value="Genomic_DNA"/>
</dbReference>
<dbReference type="EMBL" id="CP002686">
    <property type="protein sequence ID" value="AEE79394.1"/>
    <property type="molecule type" value="Genomic_DNA"/>
</dbReference>
<dbReference type="EMBL" id="AK226780">
    <property type="protein sequence ID" value="BAE98878.1"/>
    <property type="molecule type" value="mRNA"/>
</dbReference>
<dbReference type="EMBL" id="AY085997">
    <property type="protein sequence ID" value="AAM63207.1"/>
    <property type="molecule type" value="mRNA"/>
</dbReference>
<dbReference type="PIR" id="T47690">
    <property type="entry name" value="T47690"/>
</dbReference>
<dbReference type="RefSeq" id="NP_567023.1">
    <property type="nucleotide sequence ID" value="NM_115408.4"/>
</dbReference>
<dbReference type="SMR" id="Q0WVH0"/>
<dbReference type="FunCoup" id="Q0WVH0">
    <property type="interactions" value="2386"/>
</dbReference>
<dbReference type="STRING" id="3702.Q0WVH0"/>
<dbReference type="PaxDb" id="3702-AT3G55510.1"/>
<dbReference type="ProteomicsDB" id="175072"/>
<dbReference type="EnsemblPlants" id="AT3G55510.1">
    <property type="protein sequence ID" value="AT3G55510.1"/>
    <property type="gene ID" value="AT3G55510"/>
</dbReference>
<dbReference type="GeneID" id="824716"/>
<dbReference type="Gramene" id="AT3G55510.1">
    <property type="protein sequence ID" value="AT3G55510.1"/>
    <property type="gene ID" value="AT3G55510"/>
</dbReference>
<dbReference type="KEGG" id="ath:AT3G55510"/>
<dbReference type="Araport" id="AT3G55510"/>
<dbReference type="TAIR" id="AT3G55510">
    <property type="gene designation" value="RBL"/>
</dbReference>
<dbReference type="eggNOG" id="KOG2256">
    <property type="taxonomic scope" value="Eukaryota"/>
</dbReference>
<dbReference type="HOGENOM" id="CLU_011272_2_1_1"/>
<dbReference type="InParanoid" id="Q0WVH0"/>
<dbReference type="OMA" id="QMFFPIP"/>
<dbReference type="PhylomeDB" id="Q0WVH0"/>
<dbReference type="CD-CODE" id="4299E36E">
    <property type="entry name" value="Nucleolus"/>
</dbReference>
<dbReference type="PRO" id="PR:Q0WVH0"/>
<dbReference type="Proteomes" id="UP000006548">
    <property type="component" value="Chromosome 3"/>
</dbReference>
<dbReference type="ExpressionAtlas" id="Q0WVH0">
    <property type="expression patterns" value="baseline and differential"/>
</dbReference>
<dbReference type="GO" id="GO:0005730">
    <property type="term" value="C:nucleolus"/>
    <property type="evidence" value="ECO:0000314"/>
    <property type="project" value="UniProtKB"/>
</dbReference>
<dbReference type="GO" id="GO:0005654">
    <property type="term" value="C:nucleoplasm"/>
    <property type="evidence" value="ECO:0000314"/>
    <property type="project" value="UniProtKB"/>
</dbReference>
<dbReference type="GO" id="GO:0005634">
    <property type="term" value="C:nucleus"/>
    <property type="evidence" value="ECO:0000314"/>
    <property type="project" value="TAIR"/>
</dbReference>
<dbReference type="GO" id="GO:0010582">
    <property type="term" value="P:floral meristem determinacy"/>
    <property type="evidence" value="ECO:0000316"/>
    <property type="project" value="TAIR"/>
</dbReference>
<dbReference type="InterPro" id="IPR005343">
    <property type="entry name" value="Noc2"/>
</dbReference>
<dbReference type="PANTHER" id="PTHR12687">
    <property type="entry name" value="NUCLEOLAR COMPLEX 2 AND RAD4-RELATED"/>
    <property type="match status" value="1"/>
</dbReference>
<dbReference type="PANTHER" id="PTHR12687:SF8">
    <property type="entry name" value="PROTEIN REBELOTE"/>
    <property type="match status" value="1"/>
</dbReference>
<dbReference type="Pfam" id="PF03715">
    <property type="entry name" value="Noc2"/>
    <property type="match status" value="1"/>
</dbReference>
<protein>
    <recommendedName>
        <fullName evidence="5">Protein REBELOTE</fullName>
    </recommendedName>
</protein>
<organism>
    <name type="scientific">Arabidopsis thaliana</name>
    <name type="common">Mouse-ear cress</name>
    <dbReference type="NCBI Taxonomy" id="3702"/>
    <lineage>
        <taxon>Eukaryota</taxon>
        <taxon>Viridiplantae</taxon>
        <taxon>Streptophyta</taxon>
        <taxon>Embryophyta</taxon>
        <taxon>Tracheophyta</taxon>
        <taxon>Spermatophyta</taxon>
        <taxon>Magnoliopsida</taxon>
        <taxon>eudicotyledons</taxon>
        <taxon>Gunneridae</taxon>
        <taxon>Pentapetalae</taxon>
        <taxon>rosids</taxon>
        <taxon>malvids</taxon>
        <taxon>Brassicales</taxon>
        <taxon>Brassicaceae</taxon>
        <taxon>Camelineae</taxon>
        <taxon>Arabidopsis</taxon>
    </lineage>
</organism>
<reference key="1">
    <citation type="journal article" date="2000" name="Nature">
        <title>Sequence and analysis of chromosome 3 of the plant Arabidopsis thaliana.</title>
        <authorList>
            <person name="Salanoubat M."/>
            <person name="Lemcke K."/>
            <person name="Rieger M."/>
            <person name="Ansorge W."/>
            <person name="Unseld M."/>
            <person name="Fartmann B."/>
            <person name="Valle G."/>
            <person name="Bloecker H."/>
            <person name="Perez-Alonso M."/>
            <person name="Obermaier B."/>
            <person name="Delseny M."/>
            <person name="Boutry M."/>
            <person name="Grivell L.A."/>
            <person name="Mache R."/>
            <person name="Puigdomenech P."/>
            <person name="De Simone V."/>
            <person name="Choisne N."/>
            <person name="Artiguenave F."/>
            <person name="Robert C."/>
            <person name="Brottier P."/>
            <person name="Wincker P."/>
            <person name="Cattolico L."/>
            <person name="Weissenbach J."/>
            <person name="Saurin W."/>
            <person name="Quetier F."/>
            <person name="Schaefer M."/>
            <person name="Mueller-Auer S."/>
            <person name="Gabel C."/>
            <person name="Fuchs M."/>
            <person name="Benes V."/>
            <person name="Wurmbach E."/>
            <person name="Drzonek H."/>
            <person name="Erfle H."/>
            <person name="Jordan N."/>
            <person name="Bangert S."/>
            <person name="Wiedelmann R."/>
            <person name="Kranz H."/>
            <person name="Voss H."/>
            <person name="Holland R."/>
            <person name="Brandt P."/>
            <person name="Nyakatura G."/>
            <person name="Vezzi A."/>
            <person name="D'Angelo M."/>
            <person name="Pallavicini A."/>
            <person name="Toppo S."/>
            <person name="Simionati B."/>
            <person name="Conrad A."/>
            <person name="Hornischer K."/>
            <person name="Kauer G."/>
            <person name="Loehnert T.-H."/>
            <person name="Nordsiek G."/>
            <person name="Reichelt J."/>
            <person name="Scharfe M."/>
            <person name="Schoen O."/>
            <person name="Bargues M."/>
            <person name="Terol J."/>
            <person name="Climent J."/>
            <person name="Navarro P."/>
            <person name="Collado C."/>
            <person name="Perez-Perez A."/>
            <person name="Ottenwaelder B."/>
            <person name="Duchemin D."/>
            <person name="Cooke R."/>
            <person name="Laudie M."/>
            <person name="Berger-Llauro C."/>
            <person name="Purnelle B."/>
            <person name="Masuy D."/>
            <person name="de Haan M."/>
            <person name="Maarse A.C."/>
            <person name="Alcaraz J.-P."/>
            <person name="Cottet A."/>
            <person name="Casacuberta E."/>
            <person name="Monfort A."/>
            <person name="Argiriou A."/>
            <person name="Flores M."/>
            <person name="Liguori R."/>
            <person name="Vitale D."/>
            <person name="Mannhaupt G."/>
            <person name="Haase D."/>
            <person name="Schoof H."/>
            <person name="Rudd S."/>
            <person name="Zaccaria P."/>
            <person name="Mewes H.-W."/>
            <person name="Mayer K.F.X."/>
            <person name="Kaul S."/>
            <person name="Town C.D."/>
            <person name="Koo H.L."/>
            <person name="Tallon L.J."/>
            <person name="Jenkins J."/>
            <person name="Rooney T."/>
            <person name="Rizzo M."/>
            <person name="Walts A."/>
            <person name="Utterback T."/>
            <person name="Fujii C.Y."/>
            <person name="Shea T.P."/>
            <person name="Creasy T.H."/>
            <person name="Haas B."/>
            <person name="Maiti R."/>
            <person name="Wu D."/>
            <person name="Peterson J."/>
            <person name="Van Aken S."/>
            <person name="Pai G."/>
            <person name="Militscher J."/>
            <person name="Sellers P."/>
            <person name="Gill J.E."/>
            <person name="Feldblyum T.V."/>
            <person name="Preuss D."/>
            <person name="Lin X."/>
            <person name="Nierman W.C."/>
            <person name="Salzberg S.L."/>
            <person name="White O."/>
            <person name="Venter J.C."/>
            <person name="Fraser C.M."/>
            <person name="Kaneko T."/>
            <person name="Nakamura Y."/>
            <person name="Sato S."/>
            <person name="Kato T."/>
            <person name="Asamizu E."/>
            <person name="Sasamoto S."/>
            <person name="Kimura T."/>
            <person name="Idesawa K."/>
            <person name="Kawashima K."/>
            <person name="Kishida Y."/>
            <person name="Kiyokawa C."/>
            <person name="Kohara M."/>
            <person name="Matsumoto M."/>
            <person name="Matsuno A."/>
            <person name="Muraki A."/>
            <person name="Nakayama S."/>
            <person name="Nakazaki N."/>
            <person name="Shinpo S."/>
            <person name="Takeuchi C."/>
            <person name="Wada T."/>
            <person name="Watanabe A."/>
            <person name="Yamada M."/>
            <person name="Yasuda M."/>
            <person name="Tabata S."/>
        </authorList>
    </citation>
    <scope>NUCLEOTIDE SEQUENCE [LARGE SCALE GENOMIC DNA]</scope>
    <source>
        <strain>cv. Columbia</strain>
    </source>
</reference>
<reference key="2">
    <citation type="journal article" date="2017" name="Plant J.">
        <title>Araport11: a complete reannotation of the Arabidopsis thaliana reference genome.</title>
        <authorList>
            <person name="Cheng C.Y."/>
            <person name="Krishnakumar V."/>
            <person name="Chan A.P."/>
            <person name="Thibaud-Nissen F."/>
            <person name="Schobel S."/>
            <person name="Town C.D."/>
        </authorList>
    </citation>
    <scope>GENOME REANNOTATION</scope>
    <source>
        <strain>cv. Columbia</strain>
    </source>
</reference>
<reference key="3">
    <citation type="submission" date="2006-07" db="EMBL/GenBank/DDBJ databases">
        <title>Large-scale analysis of RIKEN Arabidopsis full-length (RAFL) cDNAs.</title>
        <authorList>
            <person name="Totoki Y."/>
            <person name="Seki M."/>
            <person name="Ishida J."/>
            <person name="Nakajima M."/>
            <person name="Enju A."/>
            <person name="Kamiya A."/>
            <person name="Narusaka M."/>
            <person name="Shin-i T."/>
            <person name="Nakagawa M."/>
            <person name="Sakamoto N."/>
            <person name="Oishi K."/>
            <person name="Kohara Y."/>
            <person name="Kobayashi M."/>
            <person name="Toyoda A."/>
            <person name="Sakaki Y."/>
            <person name="Sakurai T."/>
            <person name="Iida K."/>
            <person name="Akiyama K."/>
            <person name="Satou M."/>
            <person name="Toyoda T."/>
            <person name="Konagaya A."/>
            <person name="Carninci P."/>
            <person name="Kawai J."/>
            <person name="Hayashizaki Y."/>
            <person name="Shinozaki K."/>
        </authorList>
    </citation>
    <scope>NUCLEOTIDE SEQUENCE [LARGE SCALE MRNA]</scope>
    <source>
        <strain>cv. Columbia</strain>
    </source>
</reference>
<reference key="4">
    <citation type="submission" date="2002-03" db="EMBL/GenBank/DDBJ databases">
        <title>Full-length cDNA from Arabidopsis thaliana.</title>
        <authorList>
            <person name="Brover V.V."/>
            <person name="Troukhan M.E."/>
            <person name="Alexandrov N.A."/>
            <person name="Lu Y.-P."/>
            <person name="Flavell R.B."/>
            <person name="Feldmann K.A."/>
        </authorList>
    </citation>
    <scope>NUCLEOTIDE SEQUENCE [LARGE SCALE MRNA]</scope>
</reference>
<reference key="5">
    <citation type="journal article" date="2008" name="Plant Cell">
        <title>REBELOTE, SQUINT, and ULTRAPETALA1 function redundantly in the temporal regulation of floral meristem termination in Arabidopsis thaliana.</title>
        <authorList>
            <person name="Prunet N."/>
            <person name="Morel P."/>
            <person name="Thierry A.-M."/>
            <person name="Eshed Y."/>
            <person name="Bowman J.L."/>
            <person name="Negrutiu I."/>
            <person name="Trehin C."/>
        </authorList>
    </citation>
    <scope>FUNCTION</scope>
    <scope>MUTAGENESIS OF ALA-8</scope>
    <scope>DISRUPTION PHENOTYPE</scope>
    <scope>TISSUE SPECIFICITY</scope>
    <scope>SUBCELLULAR LOCATION</scope>
</reference>
<reference key="6">
    <citation type="journal article" date="2018" name="FEBS Open Bio">
        <title>REBELOTE, a regulator of floral determinacy in Arabidopsis thaliana, interacts with both nucleolar and nucleoplasmic proteins.</title>
        <authorList>
            <person name="de Bossoreille S."/>
            <person name="Morel P."/>
            <person name="Trehin C."/>
            <person name="Negrutiu I."/>
        </authorList>
    </citation>
    <scope>INTERACTION WITH ENAP1; OBE1; SWA2; NOC2 AND NOC3</scope>
    <scope>SUBCELLULAR LOCATION</scope>
</reference>
<sequence>MGKLGKKARKFAKKNLQSVEKRSRKLKPFIKKKFAKRNERHQAGDKQEKKVEQQPKKRCQEEEFQDIAIDAVFGKDDDEVLRDGDSDSDGYLDELVNETDSDIMKCKVLSRSFLATCCDMVDKEQYVPALVRLLNWYRAACQYGHEPSGIARPNIYYDIEDSETFAKVIIFVLQKADHTFRSILGLSDSSTKEKILKLKNNPKWDSLKPLVKSFFRSTLHLVKQAGDLEIISFTLTQLRVSIVFLAAFPDLLKKLIKISVHLWVTGEETISQQAFLILKDISMVFNSECFDSCLINMYKAFLHDCDIPKANSEQRPFLRDSLVELCSQDVQKSYTKASVSITQLAKLLKMALATKNKEAVEKIHSGEYINCVDLWVNFISANVQDCDLQPLLYTIVQVINGVAQLIIGPRYLLLRVKCIHWLNHLSRTSGIFIPIASLVLDMLEYKTTNDGEKQEQKLEAVSTVKLPKNWLKSQNFQEQCIFSVIELLAVHFAQWSFHISFPDLATIPVMRLKKFHERSTMEGLKRVVKRFIEQVESNIEFVQRKRDDVTFSPNDQQSADTFMQLEKQNANAPYTQYYQSIIDKALGTNKKKKK</sequence>
<feature type="chain" id="PRO_0000454495" description="Protein REBELOTE">
    <location>
        <begin position="1"/>
        <end position="594"/>
    </location>
</feature>
<feature type="region of interest" description="Disordered" evidence="2">
    <location>
        <begin position="1"/>
        <end position="21"/>
    </location>
</feature>
<feature type="region of interest" description="Disordered" evidence="2">
    <location>
        <begin position="35"/>
        <end position="58"/>
    </location>
</feature>
<feature type="short sequence motif" description="Nuclear localization signal 1" evidence="1">
    <location>
        <begin position="8"/>
        <end position="15"/>
    </location>
</feature>
<feature type="short sequence motif" description="Nuclear localization signal 2" evidence="1">
    <location>
        <begin position="35"/>
        <end position="42"/>
    </location>
</feature>
<feature type="short sequence motif" description="Nuclear localization signal 3" evidence="1">
    <location>
        <begin position="512"/>
        <end position="519"/>
    </location>
</feature>
<feature type="compositionally biased region" description="Basic residues" evidence="2">
    <location>
        <begin position="1"/>
        <end position="13"/>
    </location>
</feature>
<feature type="compositionally biased region" description="Basic and acidic residues" evidence="2">
    <location>
        <begin position="36"/>
        <end position="58"/>
    </location>
</feature>
<feature type="mutagenesis site" description="In rbl-1; indeterminate flowers in crc-1 background." evidence="3">
    <original>A</original>
    <variation>T</variation>
    <location>
        <position position="8"/>
    </location>
</feature>
<feature type="sequence conflict" description="In Ref. 4; AAM63207." evidence="6" ref="4">
    <original>S</original>
    <variation>A</variation>
    <location>
        <position position="380"/>
    </location>
</feature>
<feature type="sequence conflict" description="In Ref. 4; AAM63207." evidence="6" ref="4">
    <original>R</original>
    <variation>T</variation>
    <location>
        <position position="511"/>
    </location>
</feature>
<accession>Q0WVH0</accession>
<accession>Q8LDH9</accession>
<accession>Q9M2S8</accession>
<name>RBLOT_ARATH</name>
<keyword id="KW-0539">Nucleus</keyword>
<keyword id="KW-1185">Reference proteome</keyword>
<gene>
    <name evidence="5" type="primary">RBL</name>
    <name evidence="8" type="ordered locus">At3g55510</name>
    <name evidence="9" type="ORF">T22E16.170</name>
</gene>
<evidence type="ECO:0000255" key="1">
    <source>
        <dbReference type="PROSITE-ProRule" id="PRU00768"/>
    </source>
</evidence>
<evidence type="ECO:0000256" key="2">
    <source>
        <dbReference type="SAM" id="MobiDB-lite"/>
    </source>
</evidence>
<evidence type="ECO:0000269" key="3">
    <source>
    </source>
</evidence>
<evidence type="ECO:0000269" key="4">
    <source>
    </source>
</evidence>
<evidence type="ECO:0000303" key="5">
    <source>
    </source>
</evidence>
<evidence type="ECO:0000305" key="6"/>
<evidence type="ECO:0000305" key="7">
    <source>
    </source>
</evidence>
<evidence type="ECO:0000312" key="8">
    <source>
        <dbReference type="Araport" id="AT3G55510"/>
    </source>
</evidence>
<evidence type="ECO:0000312" key="9">
    <source>
        <dbReference type="EMBL" id="CAB75909.1"/>
    </source>
</evidence>
<comment type="function">
    <text evidence="3">Collaboratively with CYP40/SQN and ULT1, influences floral meristem (FM) determinacy in an AGAMOUS and SUPERMAN-dependent manner, thus contributing to the floral developmental homeostasis.</text>
</comment>
<comment type="subunit">
    <text evidence="4">Interacts with SWA2, NOC2 and NOC3 in both the nucleolus and nucleoplasm (PubMed:30338215). Binds to ENAP1 and OBE1 (PubMed:30338215).</text>
</comment>
<comment type="subcellular location">
    <subcellularLocation>
        <location evidence="1 3">Nucleus</location>
    </subcellularLocation>
    <subcellularLocation>
        <location evidence="4">Nucleus</location>
        <location evidence="4">Nucleolus</location>
    </subcellularLocation>
    <subcellularLocation>
        <location evidence="4">Nucleus</location>
        <location evidence="4">Nucleoplasm</location>
    </subcellularLocation>
    <text evidence="4">Observed in the nucleolus of root cells in interphase and colocalizes with DNA in dividing root cells.</text>
</comment>
<comment type="tissue specificity">
    <text evidence="3">Expressed at low levels in roots, shoots, leaves, stems, inflorescences, flowers and siliques, with highest levels dividing tissues.</text>
</comment>
<comment type="disruption phenotype">
    <text evidence="3">Plants lacking both CRC and RBL exhibit strong floral meristem (FM) indeterminacy with reiterations of extra floral whorls in the center of the flower associated with reduced AGAMOUS and SUPERMAN levels.</text>
</comment>
<comment type="miscellaneous">
    <text evidence="7">'Rebelote' means once again in French.</text>
</comment>
<comment type="similarity">
    <text evidence="6">Belongs to the NOC2 family.</text>
</comment>
<comment type="sequence caution" evidence="6">
    <conflict type="erroneous gene model prediction">
        <sequence resource="EMBL-CDS" id="CAB75909"/>
    </conflict>
</comment>